<gene>
    <name evidence="8" type="primary">Scaf8</name>
    <name evidence="6" type="synonym">Kiaa1116</name>
    <name evidence="8" type="synonym">Rbm16</name>
</gene>
<feature type="chain" id="PRO_0000394194" description="SR-related and CTD-associated factor 8">
    <location>
        <begin position="1"/>
        <end position="1268"/>
    </location>
</feature>
<feature type="domain" description="CID" evidence="3">
    <location>
        <begin position="1"/>
        <end position="139"/>
    </location>
</feature>
<feature type="domain" description="RRM" evidence="2">
    <location>
        <begin position="477"/>
        <end position="551"/>
    </location>
</feature>
<feature type="region of interest" description="Disordered" evidence="4">
    <location>
        <begin position="270"/>
        <end position="290"/>
    </location>
</feature>
<feature type="region of interest" description="Disordered" evidence="4">
    <location>
        <begin position="322"/>
        <end position="355"/>
    </location>
</feature>
<feature type="region of interest" description="Disordered" evidence="4">
    <location>
        <begin position="385"/>
        <end position="469"/>
    </location>
</feature>
<feature type="region of interest" description="Disordered" evidence="4">
    <location>
        <begin position="776"/>
        <end position="807"/>
    </location>
</feature>
<feature type="region of interest" description="Disordered" evidence="4">
    <location>
        <begin position="984"/>
        <end position="1012"/>
    </location>
</feature>
<feature type="region of interest" description="Disordered" evidence="4">
    <location>
        <begin position="1040"/>
        <end position="1065"/>
    </location>
</feature>
<feature type="region of interest" description="Disordered" evidence="4">
    <location>
        <begin position="1199"/>
        <end position="1268"/>
    </location>
</feature>
<feature type="compositionally biased region" description="Basic and acidic residues" evidence="4">
    <location>
        <begin position="270"/>
        <end position="283"/>
    </location>
</feature>
<feature type="compositionally biased region" description="Polar residues" evidence="4">
    <location>
        <begin position="327"/>
        <end position="354"/>
    </location>
</feature>
<feature type="compositionally biased region" description="Basic residues" evidence="4">
    <location>
        <begin position="394"/>
        <end position="443"/>
    </location>
</feature>
<feature type="compositionally biased region" description="Basic and acidic residues" evidence="4">
    <location>
        <begin position="447"/>
        <end position="461"/>
    </location>
</feature>
<feature type="compositionally biased region" description="Low complexity" evidence="4">
    <location>
        <begin position="1249"/>
        <end position="1262"/>
    </location>
</feature>
<feature type="modified residue" description="Phosphothreonine" evidence="1">
    <location>
        <position position="6"/>
    </location>
</feature>
<feature type="modified residue" description="Phosphoserine" evidence="1">
    <location>
        <position position="273"/>
    </location>
</feature>
<feature type="modified residue" description="Phosphoserine" evidence="9">
    <location>
        <position position="617"/>
    </location>
</feature>
<feature type="modified residue" description="Asymmetric dimethylarginine" evidence="1">
    <location>
        <position position="915"/>
    </location>
</feature>
<feature type="modified residue" description="Asymmetric dimethylarginine" evidence="1">
    <location>
        <position position="925"/>
    </location>
</feature>
<feature type="modified residue" description="Asymmetric dimethylarginine" evidence="1">
    <location>
        <position position="936"/>
    </location>
</feature>
<feature type="modified residue" description="Asymmetric dimethylarginine" evidence="10">
    <location>
        <position position="1071"/>
    </location>
</feature>
<feature type="cross-link" description="Glycyl lysine isopeptide (Lys-Gly) (interchain with G-Cter in SUMO1)" evidence="1">
    <location>
        <position position="18"/>
    </location>
</feature>
<feature type="sequence conflict" description="In Ref. 3; BAC27860." evidence="7" ref="3">
    <original>P</original>
    <variation>T</variation>
    <location>
        <position position="938"/>
    </location>
</feature>
<feature type="sequence conflict" description="In Ref. 2; AAH38363." evidence="7" ref="2">
    <original>N</original>
    <variation>I</variation>
    <location>
        <position position="1171"/>
    </location>
</feature>
<keyword id="KW-1017">Isopeptide bond</keyword>
<keyword id="KW-0488">Methylation</keyword>
<keyword id="KW-0539">Nucleus</keyword>
<keyword id="KW-0597">Phosphoprotein</keyword>
<keyword id="KW-1185">Reference proteome</keyword>
<keyword id="KW-0694">RNA-binding</keyword>
<keyword id="KW-0804">Transcription</keyword>
<keyword id="KW-0805">Transcription regulation</keyword>
<keyword id="KW-0832">Ubl conjugation</keyword>
<reference key="1">
    <citation type="journal article" date="2003" name="DNA Res.">
        <title>Prediction of the coding sequences of mouse homologues of KIAA gene: II. The complete nucleotide sequences of 400 mouse KIAA-homologous cDNAs identified by screening of terminal sequences of cDNA clones randomly sampled from size-fractionated libraries.</title>
        <authorList>
            <person name="Okazaki N."/>
            <person name="Kikuno R."/>
            <person name="Ohara R."/>
            <person name="Inamoto S."/>
            <person name="Aizawa H."/>
            <person name="Yuasa S."/>
            <person name="Nakajima D."/>
            <person name="Nagase T."/>
            <person name="Ohara O."/>
            <person name="Koga H."/>
        </authorList>
    </citation>
    <scope>NUCLEOTIDE SEQUENCE [LARGE SCALE MRNA]</scope>
    <source>
        <tissue>Brain</tissue>
    </source>
</reference>
<reference key="2">
    <citation type="journal article" date="2004" name="Genome Res.">
        <title>The status, quality, and expansion of the NIH full-length cDNA project: the Mammalian Gene Collection (MGC).</title>
        <authorList>
            <consortium name="The MGC Project Team"/>
        </authorList>
    </citation>
    <scope>NUCLEOTIDE SEQUENCE [LARGE SCALE MRNA]</scope>
    <source>
        <strain>C57BL/6J</strain>
        <strain>FVB/N-3</strain>
        <tissue>Brain</tissue>
        <tissue>Mammary tumor</tissue>
    </source>
</reference>
<reference key="3">
    <citation type="journal article" date="2005" name="Science">
        <title>The transcriptional landscape of the mammalian genome.</title>
        <authorList>
            <person name="Carninci P."/>
            <person name="Kasukawa T."/>
            <person name="Katayama S."/>
            <person name="Gough J."/>
            <person name="Frith M.C."/>
            <person name="Maeda N."/>
            <person name="Oyama R."/>
            <person name="Ravasi T."/>
            <person name="Lenhard B."/>
            <person name="Wells C."/>
            <person name="Kodzius R."/>
            <person name="Shimokawa K."/>
            <person name="Bajic V.B."/>
            <person name="Brenner S.E."/>
            <person name="Batalov S."/>
            <person name="Forrest A.R."/>
            <person name="Zavolan M."/>
            <person name="Davis M.J."/>
            <person name="Wilming L.G."/>
            <person name="Aidinis V."/>
            <person name="Allen J.E."/>
            <person name="Ambesi-Impiombato A."/>
            <person name="Apweiler R."/>
            <person name="Aturaliya R.N."/>
            <person name="Bailey T.L."/>
            <person name="Bansal M."/>
            <person name="Baxter L."/>
            <person name="Beisel K.W."/>
            <person name="Bersano T."/>
            <person name="Bono H."/>
            <person name="Chalk A.M."/>
            <person name="Chiu K.P."/>
            <person name="Choudhary V."/>
            <person name="Christoffels A."/>
            <person name="Clutterbuck D.R."/>
            <person name="Crowe M.L."/>
            <person name="Dalla E."/>
            <person name="Dalrymple B.P."/>
            <person name="de Bono B."/>
            <person name="Della Gatta G."/>
            <person name="di Bernardo D."/>
            <person name="Down T."/>
            <person name="Engstrom P."/>
            <person name="Fagiolini M."/>
            <person name="Faulkner G."/>
            <person name="Fletcher C.F."/>
            <person name="Fukushima T."/>
            <person name="Furuno M."/>
            <person name="Futaki S."/>
            <person name="Gariboldi M."/>
            <person name="Georgii-Hemming P."/>
            <person name="Gingeras T.R."/>
            <person name="Gojobori T."/>
            <person name="Green R.E."/>
            <person name="Gustincich S."/>
            <person name="Harbers M."/>
            <person name="Hayashi Y."/>
            <person name="Hensch T.K."/>
            <person name="Hirokawa N."/>
            <person name="Hill D."/>
            <person name="Huminiecki L."/>
            <person name="Iacono M."/>
            <person name="Ikeo K."/>
            <person name="Iwama A."/>
            <person name="Ishikawa T."/>
            <person name="Jakt M."/>
            <person name="Kanapin A."/>
            <person name="Katoh M."/>
            <person name="Kawasawa Y."/>
            <person name="Kelso J."/>
            <person name="Kitamura H."/>
            <person name="Kitano H."/>
            <person name="Kollias G."/>
            <person name="Krishnan S.P."/>
            <person name="Kruger A."/>
            <person name="Kummerfeld S.K."/>
            <person name="Kurochkin I.V."/>
            <person name="Lareau L.F."/>
            <person name="Lazarevic D."/>
            <person name="Lipovich L."/>
            <person name="Liu J."/>
            <person name="Liuni S."/>
            <person name="McWilliam S."/>
            <person name="Madan Babu M."/>
            <person name="Madera M."/>
            <person name="Marchionni L."/>
            <person name="Matsuda H."/>
            <person name="Matsuzawa S."/>
            <person name="Miki H."/>
            <person name="Mignone F."/>
            <person name="Miyake S."/>
            <person name="Morris K."/>
            <person name="Mottagui-Tabar S."/>
            <person name="Mulder N."/>
            <person name="Nakano N."/>
            <person name="Nakauchi H."/>
            <person name="Ng P."/>
            <person name="Nilsson R."/>
            <person name="Nishiguchi S."/>
            <person name="Nishikawa S."/>
            <person name="Nori F."/>
            <person name="Ohara O."/>
            <person name="Okazaki Y."/>
            <person name="Orlando V."/>
            <person name="Pang K.C."/>
            <person name="Pavan W.J."/>
            <person name="Pavesi G."/>
            <person name="Pesole G."/>
            <person name="Petrovsky N."/>
            <person name="Piazza S."/>
            <person name="Reed J."/>
            <person name="Reid J.F."/>
            <person name="Ring B.Z."/>
            <person name="Ringwald M."/>
            <person name="Rost B."/>
            <person name="Ruan Y."/>
            <person name="Salzberg S.L."/>
            <person name="Sandelin A."/>
            <person name="Schneider C."/>
            <person name="Schoenbach C."/>
            <person name="Sekiguchi K."/>
            <person name="Semple C.A."/>
            <person name="Seno S."/>
            <person name="Sessa L."/>
            <person name="Sheng Y."/>
            <person name="Shibata Y."/>
            <person name="Shimada H."/>
            <person name="Shimada K."/>
            <person name="Silva D."/>
            <person name="Sinclair B."/>
            <person name="Sperling S."/>
            <person name="Stupka E."/>
            <person name="Sugiura K."/>
            <person name="Sultana R."/>
            <person name="Takenaka Y."/>
            <person name="Taki K."/>
            <person name="Tammoja K."/>
            <person name="Tan S.L."/>
            <person name="Tang S."/>
            <person name="Taylor M.S."/>
            <person name="Tegner J."/>
            <person name="Teichmann S.A."/>
            <person name="Ueda H.R."/>
            <person name="van Nimwegen E."/>
            <person name="Verardo R."/>
            <person name="Wei C.L."/>
            <person name="Yagi K."/>
            <person name="Yamanishi H."/>
            <person name="Zabarovsky E."/>
            <person name="Zhu S."/>
            <person name="Zimmer A."/>
            <person name="Hide W."/>
            <person name="Bult C."/>
            <person name="Grimmond S.M."/>
            <person name="Teasdale R.D."/>
            <person name="Liu E.T."/>
            <person name="Brusic V."/>
            <person name="Quackenbush J."/>
            <person name="Wahlestedt C."/>
            <person name="Mattick J.S."/>
            <person name="Hume D.A."/>
            <person name="Kai C."/>
            <person name="Sasaki D."/>
            <person name="Tomaru Y."/>
            <person name="Fukuda S."/>
            <person name="Kanamori-Katayama M."/>
            <person name="Suzuki M."/>
            <person name="Aoki J."/>
            <person name="Arakawa T."/>
            <person name="Iida J."/>
            <person name="Imamura K."/>
            <person name="Itoh M."/>
            <person name="Kato T."/>
            <person name="Kawaji H."/>
            <person name="Kawagashira N."/>
            <person name="Kawashima T."/>
            <person name="Kojima M."/>
            <person name="Kondo S."/>
            <person name="Konno H."/>
            <person name="Nakano K."/>
            <person name="Ninomiya N."/>
            <person name="Nishio T."/>
            <person name="Okada M."/>
            <person name="Plessy C."/>
            <person name="Shibata K."/>
            <person name="Shiraki T."/>
            <person name="Suzuki S."/>
            <person name="Tagami M."/>
            <person name="Waki K."/>
            <person name="Watahiki A."/>
            <person name="Okamura-Oho Y."/>
            <person name="Suzuki H."/>
            <person name="Kawai J."/>
            <person name="Hayashizaki Y."/>
        </authorList>
    </citation>
    <scope>NUCLEOTIDE SEQUENCE [LARGE SCALE MRNA] OF 462-1268</scope>
    <source>
        <strain>C57BL/6J</strain>
        <tissue>Olfactory bulb</tissue>
        <tissue>Skin</tissue>
    </source>
</reference>
<reference key="4">
    <citation type="journal article" date="1996" name="Proc. Natl. Acad. Sci. U.S.A.">
        <title>The C-terminal domain of the largest subunit of RNA polymerase II interacts with a novel set of serine/arginine-rich proteins.</title>
        <authorList>
            <person name="Yuryev A."/>
            <person name="Patturajan M."/>
            <person name="Litingtung Y."/>
            <person name="Joshi R.V."/>
            <person name="Gentile C."/>
            <person name="Gebara M."/>
            <person name="Corden J.L."/>
        </authorList>
    </citation>
    <scope>INTERACTION WITH POLR2A</scope>
</reference>
<reference key="5">
    <citation type="journal article" date="1998" name="Mol. Cell. Biol.">
        <title>A nuclear matrix protein interacts with the phosphorylated C-terminal domain of RNA polymerase II.</title>
        <authorList>
            <person name="Patturajan M."/>
            <person name="Wei X."/>
            <person name="Berezney R."/>
            <person name="Corden J.L."/>
        </authorList>
    </citation>
    <scope>INTERACTION WITH POLR2A</scope>
    <scope>SUBCELLULAR LOCATION</scope>
</reference>
<reference key="6">
    <citation type="journal article" date="2010" name="Cell">
        <title>A tissue-specific atlas of mouse protein phosphorylation and expression.</title>
        <authorList>
            <person name="Huttlin E.L."/>
            <person name="Jedrychowski M.P."/>
            <person name="Elias J.E."/>
            <person name="Goswami T."/>
            <person name="Rad R."/>
            <person name="Beausoleil S.A."/>
            <person name="Villen J."/>
            <person name="Haas W."/>
            <person name="Sowa M.E."/>
            <person name="Gygi S.P."/>
        </authorList>
    </citation>
    <scope>PHOSPHORYLATION [LARGE SCALE ANALYSIS] AT SER-617</scope>
    <scope>IDENTIFICATION BY MASS SPECTROMETRY [LARGE SCALE ANALYSIS]</scope>
    <source>
        <tissue>Brain</tissue>
        <tissue>Kidney</tissue>
        <tissue>Lung</tissue>
        <tissue>Pancreas</tissue>
        <tissue>Spleen</tissue>
        <tissue>Testis</tissue>
    </source>
</reference>
<reference key="7">
    <citation type="journal article" date="2014" name="Mol. Cell. Proteomics">
        <title>Immunoaffinity enrichment and mass spectrometry analysis of protein methylation.</title>
        <authorList>
            <person name="Guo A."/>
            <person name="Gu H."/>
            <person name="Zhou J."/>
            <person name="Mulhern D."/>
            <person name="Wang Y."/>
            <person name="Lee K.A."/>
            <person name="Yang V."/>
            <person name="Aguiar M."/>
            <person name="Kornhauser J."/>
            <person name="Jia X."/>
            <person name="Ren J."/>
            <person name="Beausoleil S.A."/>
            <person name="Silva J.C."/>
            <person name="Vemulapalli V."/>
            <person name="Bedford M.T."/>
            <person name="Comb M.J."/>
        </authorList>
    </citation>
    <scope>METHYLATION [LARGE SCALE ANALYSIS] AT ARG-1071</scope>
    <scope>IDENTIFICATION BY MASS SPECTROMETRY [LARGE SCALE ANALYSIS]</scope>
    <source>
        <tissue>Brain</tissue>
        <tissue>Embryo</tissue>
    </source>
</reference>
<protein>
    <recommendedName>
        <fullName evidence="7">SR-related and CTD-associated factor 8</fullName>
    </recommendedName>
    <alternativeName>
        <fullName evidence="7">RNA-binding motif protein 16</fullName>
    </alternativeName>
</protein>
<proteinExistence type="evidence at protein level"/>
<dbReference type="EMBL" id="AK122451">
    <property type="protein sequence ID" value="BAC65733.1"/>
    <property type="status" value="ALT_INIT"/>
    <property type="molecule type" value="mRNA"/>
</dbReference>
<dbReference type="EMBL" id="BC038363">
    <property type="protein sequence ID" value="AAH38363.1"/>
    <property type="molecule type" value="mRNA"/>
</dbReference>
<dbReference type="EMBL" id="BC075621">
    <property type="protein sequence ID" value="AAH75621.1"/>
    <property type="molecule type" value="mRNA"/>
</dbReference>
<dbReference type="EMBL" id="AK032418">
    <property type="protein sequence ID" value="BAC27860.1"/>
    <property type="molecule type" value="mRNA"/>
</dbReference>
<dbReference type="EMBL" id="AK161113">
    <property type="protein sequence ID" value="BAE36197.1"/>
    <property type="molecule type" value="mRNA"/>
</dbReference>
<dbReference type="CCDS" id="CCDS49927.1"/>
<dbReference type="RefSeq" id="NP_598884.2">
    <property type="nucleotide sequence ID" value="NM_134123.3"/>
</dbReference>
<dbReference type="SMR" id="Q6DID3"/>
<dbReference type="BioGRID" id="223085">
    <property type="interactions" value="2"/>
</dbReference>
<dbReference type="FunCoup" id="Q6DID3">
    <property type="interactions" value="5579"/>
</dbReference>
<dbReference type="IntAct" id="Q6DID3">
    <property type="interactions" value="1"/>
</dbReference>
<dbReference type="MINT" id="Q6DID3"/>
<dbReference type="STRING" id="10090.ENSMUSP00000076024"/>
<dbReference type="GlyGen" id="Q6DID3">
    <property type="glycosylation" value="4 sites, 1 O-linked glycan (3 sites)"/>
</dbReference>
<dbReference type="iPTMnet" id="Q6DID3"/>
<dbReference type="PhosphoSitePlus" id="Q6DID3"/>
<dbReference type="SwissPalm" id="Q6DID3"/>
<dbReference type="jPOST" id="Q6DID3"/>
<dbReference type="PaxDb" id="10090-ENSMUSP00000076024"/>
<dbReference type="PeptideAtlas" id="Q6DID3"/>
<dbReference type="ProteomicsDB" id="255478"/>
<dbReference type="Pumba" id="Q6DID3"/>
<dbReference type="Antibodypedia" id="33407">
    <property type="antibodies" value="95 antibodies from 22 providers"/>
</dbReference>
<dbReference type="Ensembl" id="ENSMUST00000076734.8">
    <property type="protein sequence ID" value="ENSMUSP00000076024.7"/>
    <property type="gene ID" value="ENSMUSG00000046201.10"/>
</dbReference>
<dbReference type="GeneID" id="106583"/>
<dbReference type="KEGG" id="mmu:106583"/>
<dbReference type="UCSC" id="uc008aei.2">
    <property type="organism name" value="mouse"/>
</dbReference>
<dbReference type="AGR" id="MGI:1925212"/>
<dbReference type="CTD" id="22828"/>
<dbReference type="MGI" id="MGI:1925212">
    <property type="gene designation" value="Scaf8"/>
</dbReference>
<dbReference type="VEuPathDB" id="HostDB:ENSMUSG00000046201"/>
<dbReference type="eggNOG" id="KOG0132">
    <property type="taxonomic scope" value="Eukaryota"/>
</dbReference>
<dbReference type="GeneTree" id="ENSGT00530000063946"/>
<dbReference type="HOGENOM" id="CLU_005263_1_0_1"/>
<dbReference type="InParanoid" id="Q6DID3"/>
<dbReference type="OMA" id="HQQKAMN"/>
<dbReference type="OrthoDB" id="81320at9989"/>
<dbReference type="PhylomeDB" id="Q6DID3"/>
<dbReference type="TreeFam" id="TF324527"/>
<dbReference type="BioGRID-ORCS" id="106583">
    <property type="hits" value="7 hits in 78 CRISPR screens"/>
</dbReference>
<dbReference type="ChiTaRS" id="Scaf8">
    <property type="organism name" value="mouse"/>
</dbReference>
<dbReference type="PRO" id="PR:Q6DID3"/>
<dbReference type="Proteomes" id="UP000000589">
    <property type="component" value="Chromosome 17"/>
</dbReference>
<dbReference type="RNAct" id="Q6DID3">
    <property type="molecule type" value="protein"/>
</dbReference>
<dbReference type="Bgee" id="ENSMUSG00000046201">
    <property type="expression patterns" value="Expressed in dorsal pancreas and 252 other cell types or tissues"/>
</dbReference>
<dbReference type="ExpressionAtlas" id="Q6DID3">
    <property type="expression patterns" value="baseline and differential"/>
</dbReference>
<dbReference type="GO" id="GO:0016363">
    <property type="term" value="C:nuclear matrix"/>
    <property type="evidence" value="ECO:0000250"/>
    <property type="project" value="UniProtKB"/>
</dbReference>
<dbReference type="GO" id="GO:0005654">
    <property type="term" value="C:nucleoplasm"/>
    <property type="evidence" value="ECO:0007669"/>
    <property type="project" value="Ensembl"/>
</dbReference>
<dbReference type="GO" id="GO:0005634">
    <property type="term" value="C:nucleus"/>
    <property type="evidence" value="ECO:0000250"/>
    <property type="project" value="UniProtKB"/>
</dbReference>
<dbReference type="GO" id="GO:0003723">
    <property type="term" value="F:RNA binding"/>
    <property type="evidence" value="ECO:0000250"/>
    <property type="project" value="UniProtKB"/>
</dbReference>
<dbReference type="GO" id="GO:1990269">
    <property type="term" value="F:RNA polymerase II C-terminal domain phosphoserine binding"/>
    <property type="evidence" value="ECO:0000250"/>
    <property type="project" value="UniProtKB"/>
</dbReference>
<dbReference type="GO" id="GO:2000805">
    <property type="term" value="P:negative regulation of termination of RNA polymerase II transcription, poly(A)-coupled"/>
    <property type="evidence" value="ECO:0000250"/>
    <property type="project" value="UniProtKB"/>
</dbReference>
<dbReference type="GO" id="GO:0032786">
    <property type="term" value="P:positive regulation of DNA-templated transcription, elongation"/>
    <property type="evidence" value="ECO:0000250"/>
    <property type="project" value="UniProtKB"/>
</dbReference>
<dbReference type="CDD" id="cd17004">
    <property type="entry name" value="CID_SCAF8"/>
    <property type="match status" value="1"/>
</dbReference>
<dbReference type="CDD" id="cd12462">
    <property type="entry name" value="RRM_SCAF8"/>
    <property type="match status" value="1"/>
</dbReference>
<dbReference type="FunFam" id="1.25.40.90:FF:000004">
    <property type="entry name" value="splicing factor, arginine/serine-rich 15"/>
    <property type="match status" value="1"/>
</dbReference>
<dbReference type="FunFam" id="3.30.70.330:FF:000094">
    <property type="entry name" value="SR-related CTD associated factor 8"/>
    <property type="match status" value="1"/>
</dbReference>
<dbReference type="Gene3D" id="1.25.40.90">
    <property type="match status" value="1"/>
</dbReference>
<dbReference type="Gene3D" id="3.30.70.330">
    <property type="match status" value="1"/>
</dbReference>
<dbReference type="InterPro" id="IPR006569">
    <property type="entry name" value="CID_dom"/>
</dbReference>
<dbReference type="InterPro" id="IPR008942">
    <property type="entry name" value="ENTH_VHS"/>
</dbReference>
<dbReference type="InterPro" id="IPR012677">
    <property type="entry name" value="Nucleotide-bd_a/b_plait_sf"/>
</dbReference>
<dbReference type="InterPro" id="IPR035979">
    <property type="entry name" value="RBD_domain_sf"/>
</dbReference>
<dbReference type="InterPro" id="IPR000504">
    <property type="entry name" value="RRM_dom"/>
</dbReference>
<dbReference type="InterPro" id="IPR034370">
    <property type="entry name" value="SCAF8_RRM"/>
</dbReference>
<dbReference type="InterPro" id="IPR051485">
    <property type="entry name" value="SR-CTD_assoc_factor"/>
</dbReference>
<dbReference type="PANTHER" id="PTHR23140">
    <property type="entry name" value="RNA PROCESSING PROTEIN LD23810P"/>
    <property type="match status" value="1"/>
</dbReference>
<dbReference type="PANTHER" id="PTHR23140:SF1">
    <property type="entry name" value="SR-RELATED CTD ASSOCIATED FACTOR 8"/>
    <property type="match status" value="1"/>
</dbReference>
<dbReference type="Pfam" id="PF04818">
    <property type="entry name" value="CID"/>
    <property type="match status" value="1"/>
</dbReference>
<dbReference type="Pfam" id="PF00076">
    <property type="entry name" value="RRM_1"/>
    <property type="match status" value="1"/>
</dbReference>
<dbReference type="SMART" id="SM00582">
    <property type="entry name" value="RPR"/>
    <property type="match status" value="1"/>
</dbReference>
<dbReference type="SMART" id="SM00360">
    <property type="entry name" value="RRM"/>
    <property type="match status" value="1"/>
</dbReference>
<dbReference type="SUPFAM" id="SSF48464">
    <property type="entry name" value="ENTH/VHS domain"/>
    <property type="match status" value="1"/>
</dbReference>
<dbReference type="SUPFAM" id="SSF54928">
    <property type="entry name" value="RNA-binding domain, RBD"/>
    <property type="match status" value="1"/>
</dbReference>
<dbReference type="PROSITE" id="PS51391">
    <property type="entry name" value="CID"/>
    <property type="match status" value="1"/>
</dbReference>
<dbReference type="PROSITE" id="PS50102">
    <property type="entry name" value="RRM"/>
    <property type="match status" value="1"/>
</dbReference>
<name>SCAF8_MOUSE</name>
<organism>
    <name type="scientific">Mus musculus</name>
    <name type="common">Mouse</name>
    <dbReference type="NCBI Taxonomy" id="10090"/>
    <lineage>
        <taxon>Eukaryota</taxon>
        <taxon>Metazoa</taxon>
        <taxon>Chordata</taxon>
        <taxon>Craniata</taxon>
        <taxon>Vertebrata</taxon>
        <taxon>Euteleostomi</taxon>
        <taxon>Mammalia</taxon>
        <taxon>Eutheria</taxon>
        <taxon>Euarchontoglires</taxon>
        <taxon>Glires</taxon>
        <taxon>Rodentia</taxon>
        <taxon>Myomorpha</taxon>
        <taxon>Muroidea</taxon>
        <taxon>Muridae</taxon>
        <taxon>Murinae</taxon>
        <taxon>Mus</taxon>
        <taxon>Mus</taxon>
    </lineage>
</organism>
<evidence type="ECO:0000250" key="1">
    <source>
        <dbReference type="UniProtKB" id="Q9UPN6"/>
    </source>
</evidence>
<evidence type="ECO:0000255" key="2">
    <source>
        <dbReference type="PROSITE-ProRule" id="PRU00176"/>
    </source>
</evidence>
<evidence type="ECO:0000255" key="3">
    <source>
        <dbReference type="PROSITE-ProRule" id="PRU00724"/>
    </source>
</evidence>
<evidence type="ECO:0000256" key="4">
    <source>
        <dbReference type="SAM" id="MobiDB-lite"/>
    </source>
</evidence>
<evidence type="ECO:0000269" key="5">
    <source>
    </source>
</evidence>
<evidence type="ECO:0000303" key="6">
    <source>
    </source>
</evidence>
<evidence type="ECO:0000305" key="7"/>
<evidence type="ECO:0000312" key="8">
    <source>
        <dbReference type="MGI" id="MGI:1925212"/>
    </source>
</evidence>
<evidence type="ECO:0007744" key="9">
    <source>
    </source>
</evidence>
<evidence type="ECO:0007744" key="10">
    <source>
    </source>
</evidence>
<comment type="function">
    <text evidence="1">Anti-terminator protein required to prevent early mRNA termination during transcription. Together with SCAF4, acts by suppressing the use of early, alternative poly(A) sites, thereby preventing the accumulation of non-functional truncated proteins. Mechanistically, associates with the phosphorylated C-terminal heptapeptide repeat domain (CTD) of the largest RNA polymerase II subunit (POLR2A), and subsequently binds nascent RNA upstream of early polyadenylation sites to prevent premature mRNA transcript cleavage and polyadenylation. Independently of SCAF4, also acts as a positive regulator of transcript elongation.</text>
</comment>
<comment type="subunit">
    <text evidence="1 5">Interacts with POLR2A; via C-terminal heptapeptide repeat domain (CTD) phosphorylated at 'Ser-2' and 'Ser-5' (PubMed:9528809). Identified in a complex with CDC5L and other spliceosomal proteins (By similarity).</text>
</comment>
<comment type="subcellular location">
    <subcellularLocation>
        <location evidence="5">Nucleus</location>
    </subcellularLocation>
    <subcellularLocation>
        <location evidence="5">Nucleus matrix</location>
    </subcellularLocation>
    <text evidence="1">Detected in granular nuclear foci which correspond to sites of active transcription.</text>
</comment>
<comment type="sequence caution" evidence="7">
    <conflict type="erroneous initiation">
        <sequence resource="EMBL-CDS" id="BAC65733"/>
    </conflict>
    <text>Extended N-terminus.</text>
</comment>
<accession>Q6DID3</accession>
<accession>Q3TTX6</accession>
<accession>Q5U5V8</accession>
<accession>Q80TJ3</accession>
<accession>Q8C037</accession>
<sequence>MEAVKTFNSELYSLNDYKPPISKAKMTQITKAAIKAIKFYKHVVQSVEKFIQKCKPEYKVPGLYVIDSIVRQSRHQFGQEKDVFAPRFSNNIISTFQNLYRCPGDDKSKIVRVLNLWQKNNVFKSEIIQPLLDMAAGIPPPVVTPVLASTTAAMSNTPGTPVTPVTPANVVQGLPDPWVSQIANTDTLAAVAQILQSPQGQQLQQLIQTLQIQQQKPQPSILQALDAGLVVQLQALTAQLTAAAAAANTLTPLDQGVSFNKKLMDRFDFGEDSEHSEESKKEMPTPQLSHVSESVNNSIFHQIAEQLQQQNLEQLRQQLLEQQQPQKVTPQDSQEGTFGSEHSASPSQGSSQQHFLEPEANLDDSIDIQQQDMDIDEGQDVVEEEIFEPEAKKVAVRSRSRTHSRSRSRSPRKRRSRSRSGSRKRKHRKRSRSHSREKKRKASRSYSSERRAREREKERQKKGLPPVRSKTLSVCSTTLWVGQVDKKATQQDLTNLFEEFGQIESINMIPPRGCAYVCMVHRQDSFRALQKLSSGSYKIGSKVIKIAWALNKGVKTEYKQFWDVDLGVTYIPWEKVKVDDLDGFAEGGMIDQETVNAEWETVKASEPVKEPVQTAQSPAPVEKESVVTTQAEVFPPPVAMLQIPVAPAVPAVSLVPPAFPVSMPVPPPGFNPIPPPPFLRASFNPSQPPPGFMPPPVPPPVVPPPAIPPVVPTSLVQPPLSMTPEAVKDVGFGSLVLPSGSVAGSLAPSTLPAGNVFNPPSKAEPEEKVPHLIEHQIPSGENTRPVIPSDIPSSAAMLAQPPGASSTSGILCVQRPNVSSNSEILGVRPANVSNSAAIMGAQPPNILNNSGILAIQPPNVSSGSGLLGVLPPNLPNNSGLVGLQPPNVTSPAGLLGTQPPIGPQNLPPLAIPAQRMPALPMLDIRPGLIAQAPGPRFPLLQPGIPPQRGIPPPSVLDAALHPPPRGPFPPGDLFSQPERPFLAPGRPSIDNVPNPDKRIPLGNDNIQQEGDRDYRFPPIETREGITRPPQVDVRDVVGRRLDPREGPGRPPLDARDHFGRPPVDMRENLVRPSLDHLGRRDHFGFPPEKPWGPRDFDEREHRVLPVFGGPKGLHEERGRFRAGNYRFDPRSGPWNRGFGQEVHRDFDDRRRPWERQRDRDDRDFDFCREINGNRLGRDRIQNTWVPPPHARVFDYFEGATSQRKGDNVPQVNGENTERHAQPPPLPVQKDPELYEKLASSGDVDKEESGTVAGVESEAVVESTETEGT</sequence>